<feature type="chain" id="PRO_0000323033" description="Dehydration-responsive element-binding protein 1D">
    <location>
        <begin position="1"/>
        <end position="253"/>
    </location>
</feature>
<feature type="DNA-binding region" description="AP2/ERF" evidence="2">
    <location>
        <begin position="39"/>
        <end position="98"/>
    </location>
</feature>
<feature type="region of interest" description="Disordered" evidence="3">
    <location>
        <begin position="1"/>
        <end position="31"/>
    </location>
</feature>
<feature type="region of interest" description="Disordered" evidence="3">
    <location>
        <begin position="131"/>
        <end position="153"/>
    </location>
</feature>
<feature type="compositionally biased region" description="Polar residues" evidence="3">
    <location>
        <begin position="1"/>
        <end position="22"/>
    </location>
</feature>
<feature type="compositionally biased region" description="Low complexity" evidence="3">
    <location>
        <begin position="134"/>
        <end position="153"/>
    </location>
</feature>
<keyword id="KW-0010">Activator</keyword>
<keyword id="KW-0238">DNA-binding</keyword>
<keyword id="KW-0539">Nucleus</keyword>
<keyword id="KW-0346">Stress response</keyword>
<keyword id="KW-0804">Transcription</keyword>
<keyword id="KW-0805">Transcription regulation</keyword>
<gene>
    <name type="primary">DREB1D</name>
    <name type="synonym">CBF4</name>
    <name type="synonym">ERF116</name>
</gene>
<name>DRE1D_ORYSI</name>
<accession>Q6REU5</accession>
<reference key="1">
    <citation type="submission" date="2003-12" db="EMBL/GenBank/DDBJ databases">
        <title>Isolation and characterization of a CRT/DRE-binding protein gene.</title>
        <authorList>
            <person name="Ravindra Babu P."/>
            <person name="Markandeya G."/>
            <person name="Reddy A.R."/>
        </authorList>
    </citation>
    <scope>NUCLEOTIDE SEQUENCE [GENOMIC DNA]</scope>
    <source>
        <strain>cv. IR62266</strain>
    </source>
</reference>
<comment type="function">
    <text evidence="1">Transcriptional activator that binds specifically to the DNA sequence 5'-[AG]CCGAC-3'. Binding to the C-repeat/DRE element mediates high salinity- and dehydration-inducible transcription (By similarity).</text>
</comment>
<comment type="subcellular location">
    <subcellularLocation>
        <location evidence="4">Nucleus</location>
    </subcellularLocation>
</comment>
<comment type="similarity">
    <text evidence="4">Belongs to the AP2/ERF transcription factor family. ERF subfamily.</text>
</comment>
<sequence length="253" mass="27668">MEKNTAASGQLMTSSAEATPSSPKRPAGRTKFQETRHLVFRGVRWRGCAGRWVCKVRVPGSRGDRFWIGTSDTAEETARTHDAAMLALCGASASLNFADSAWLLHVPRAPVVSGLRPPAARCATRCLQGHRRVPAPGRGSTATATATSGDAASTAPPSAPVLSAKQCEFIFLSSLDCWMLMSKLISSSRAKGSLCLRKNPISFCMVTNSYTALLLEYIILQMNSMIVLIHELSKYQVFLLLTMITHHLFQWRR</sequence>
<dbReference type="EMBL" id="AY502052">
    <property type="protein sequence ID" value="AAR88625.1"/>
    <property type="molecule type" value="Genomic_DNA"/>
</dbReference>
<dbReference type="SMR" id="Q6REU5"/>
<dbReference type="GO" id="GO:0005634">
    <property type="term" value="C:nucleus"/>
    <property type="evidence" value="ECO:0007669"/>
    <property type="project" value="UniProtKB-SubCell"/>
</dbReference>
<dbReference type="GO" id="GO:0003677">
    <property type="term" value="F:DNA binding"/>
    <property type="evidence" value="ECO:0007669"/>
    <property type="project" value="UniProtKB-KW"/>
</dbReference>
<dbReference type="GO" id="GO:0003700">
    <property type="term" value="F:DNA-binding transcription factor activity"/>
    <property type="evidence" value="ECO:0007669"/>
    <property type="project" value="InterPro"/>
</dbReference>
<dbReference type="CDD" id="cd00018">
    <property type="entry name" value="AP2"/>
    <property type="match status" value="1"/>
</dbReference>
<dbReference type="Gene3D" id="3.30.730.10">
    <property type="entry name" value="AP2/ERF domain"/>
    <property type="match status" value="1"/>
</dbReference>
<dbReference type="InterPro" id="IPR001471">
    <property type="entry name" value="AP2/ERF_dom"/>
</dbReference>
<dbReference type="InterPro" id="IPR036955">
    <property type="entry name" value="AP2/ERF_dom_sf"/>
</dbReference>
<dbReference type="InterPro" id="IPR016177">
    <property type="entry name" value="DNA-bd_dom_sf"/>
</dbReference>
<dbReference type="InterPro" id="IPR045277">
    <property type="entry name" value="DRE1A-I"/>
</dbReference>
<dbReference type="PANTHER" id="PTHR31839">
    <property type="entry name" value="DEHYDRATION-RESPONSIVE ELEMENT-BINDING PROTEIN 1D"/>
    <property type="match status" value="1"/>
</dbReference>
<dbReference type="PANTHER" id="PTHR31839:SF11">
    <property type="entry name" value="DEHYDRATION-RESPONSIVE ELEMENT-BINDING PROTEIN 1D"/>
    <property type="match status" value="1"/>
</dbReference>
<dbReference type="Pfam" id="PF00847">
    <property type="entry name" value="AP2"/>
    <property type="match status" value="1"/>
</dbReference>
<dbReference type="SMART" id="SM00380">
    <property type="entry name" value="AP2"/>
    <property type="match status" value="1"/>
</dbReference>
<dbReference type="SUPFAM" id="SSF54171">
    <property type="entry name" value="DNA-binding domain"/>
    <property type="match status" value="1"/>
</dbReference>
<dbReference type="PROSITE" id="PS51032">
    <property type="entry name" value="AP2_ERF"/>
    <property type="match status" value="1"/>
</dbReference>
<evidence type="ECO:0000250" key="1"/>
<evidence type="ECO:0000255" key="2">
    <source>
        <dbReference type="PROSITE-ProRule" id="PRU00366"/>
    </source>
</evidence>
<evidence type="ECO:0000256" key="3">
    <source>
        <dbReference type="SAM" id="MobiDB-lite"/>
    </source>
</evidence>
<evidence type="ECO:0000305" key="4"/>
<protein>
    <recommendedName>
        <fullName>Dehydration-responsive element-binding protein 1D</fullName>
        <shortName>Protein DREB1D</shortName>
    </recommendedName>
    <alternativeName>
        <fullName>Protein C-repeat-binding factor 4</fullName>
    </alternativeName>
</protein>
<proteinExistence type="inferred from homology"/>
<organism>
    <name type="scientific">Oryza sativa subsp. indica</name>
    <name type="common">Rice</name>
    <dbReference type="NCBI Taxonomy" id="39946"/>
    <lineage>
        <taxon>Eukaryota</taxon>
        <taxon>Viridiplantae</taxon>
        <taxon>Streptophyta</taxon>
        <taxon>Embryophyta</taxon>
        <taxon>Tracheophyta</taxon>
        <taxon>Spermatophyta</taxon>
        <taxon>Magnoliopsida</taxon>
        <taxon>Liliopsida</taxon>
        <taxon>Poales</taxon>
        <taxon>Poaceae</taxon>
        <taxon>BOP clade</taxon>
        <taxon>Oryzoideae</taxon>
        <taxon>Oryzeae</taxon>
        <taxon>Oryzinae</taxon>
        <taxon>Oryza</taxon>
        <taxon>Oryza sativa</taxon>
    </lineage>
</organism>